<comment type="function">
    <text evidence="1 4">Core component of the spliceosomal U1, U2, U4 and U5 small nuclear ribonucleoproteins (snRNPs), the building blocks of the spliceosome (By similarity). May play a major role in the splicing of cellular pre-mRNAs. Required for normal plant development (PubMed:21421416).</text>
</comment>
<comment type="subcellular location">
    <subcellularLocation>
        <location evidence="1">Cytoplasm</location>
        <location evidence="1">Cytosol</location>
    </subcellularLocation>
    <subcellularLocation>
        <location evidence="1">Nucleus</location>
    </subcellularLocation>
    <text evidence="1">SMN-mediated assembly into core snRNPs occurs in the cytosol before SMN-mediated transport to the nucleus to be included in spliceosomes.</text>
</comment>
<comment type="tissue specificity">
    <text evidence="4">Expressed in young seedlings, roots, leaves, flowers and immature siliques.</text>
</comment>
<comment type="disruption phenotype">
    <text evidence="4">Pleiotropic phenotypes of delayed flowering time and seed production, reduced root growth, partially defective leaf venation, abnormal numbers of trichome branches and changed numbers of floral organs. The double mutants smd3-a and smd3-b display embryonic lethality.</text>
</comment>
<comment type="similarity">
    <text evidence="6">Belongs to the snRNP core protein family.</text>
</comment>
<comment type="sequence caution" evidence="6">
    <conflict type="erroneous gene model prediction">
        <sequence resource="EMBL-CDS" id="AAF79623"/>
    </conflict>
</comment>
<reference key="1">
    <citation type="journal article" date="2000" name="Nature">
        <title>Sequence and analysis of chromosome 1 of the plant Arabidopsis thaliana.</title>
        <authorList>
            <person name="Theologis A."/>
            <person name="Ecker J.R."/>
            <person name="Palm C.J."/>
            <person name="Federspiel N.A."/>
            <person name="Kaul S."/>
            <person name="White O."/>
            <person name="Alonso J."/>
            <person name="Altafi H."/>
            <person name="Araujo R."/>
            <person name="Bowman C.L."/>
            <person name="Brooks S.Y."/>
            <person name="Buehler E."/>
            <person name="Chan A."/>
            <person name="Chao Q."/>
            <person name="Chen H."/>
            <person name="Cheuk R.F."/>
            <person name="Chin C.W."/>
            <person name="Chung M.K."/>
            <person name="Conn L."/>
            <person name="Conway A.B."/>
            <person name="Conway A.R."/>
            <person name="Creasy T.H."/>
            <person name="Dewar K."/>
            <person name="Dunn P."/>
            <person name="Etgu P."/>
            <person name="Feldblyum T.V."/>
            <person name="Feng J.-D."/>
            <person name="Fong B."/>
            <person name="Fujii C.Y."/>
            <person name="Gill J.E."/>
            <person name="Goldsmith A.D."/>
            <person name="Haas B."/>
            <person name="Hansen N.F."/>
            <person name="Hughes B."/>
            <person name="Huizar L."/>
            <person name="Hunter J.L."/>
            <person name="Jenkins J."/>
            <person name="Johnson-Hopson C."/>
            <person name="Khan S."/>
            <person name="Khaykin E."/>
            <person name="Kim C.J."/>
            <person name="Koo H.L."/>
            <person name="Kremenetskaia I."/>
            <person name="Kurtz D.B."/>
            <person name="Kwan A."/>
            <person name="Lam B."/>
            <person name="Langin-Hooper S."/>
            <person name="Lee A."/>
            <person name="Lee J.M."/>
            <person name="Lenz C.A."/>
            <person name="Li J.H."/>
            <person name="Li Y.-P."/>
            <person name="Lin X."/>
            <person name="Liu S.X."/>
            <person name="Liu Z.A."/>
            <person name="Luros J.S."/>
            <person name="Maiti R."/>
            <person name="Marziali A."/>
            <person name="Militscher J."/>
            <person name="Miranda M."/>
            <person name="Nguyen M."/>
            <person name="Nierman W.C."/>
            <person name="Osborne B.I."/>
            <person name="Pai G."/>
            <person name="Peterson J."/>
            <person name="Pham P.K."/>
            <person name="Rizzo M."/>
            <person name="Rooney T."/>
            <person name="Rowley D."/>
            <person name="Sakano H."/>
            <person name="Salzberg S.L."/>
            <person name="Schwartz J.R."/>
            <person name="Shinn P."/>
            <person name="Southwick A.M."/>
            <person name="Sun H."/>
            <person name="Tallon L.J."/>
            <person name="Tambunga G."/>
            <person name="Toriumi M.J."/>
            <person name="Town C.D."/>
            <person name="Utterback T."/>
            <person name="Van Aken S."/>
            <person name="Vaysberg M."/>
            <person name="Vysotskaia V.S."/>
            <person name="Walker M."/>
            <person name="Wu D."/>
            <person name="Yu G."/>
            <person name="Fraser C.M."/>
            <person name="Venter J.C."/>
            <person name="Davis R.W."/>
        </authorList>
    </citation>
    <scope>NUCLEOTIDE SEQUENCE [LARGE SCALE GENOMIC DNA]</scope>
    <source>
        <strain>cv. Columbia</strain>
    </source>
</reference>
<reference key="2">
    <citation type="journal article" date="2017" name="Plant J.">
        <title>Araport11: a complete reannotation of the Arabidopsis thaliana reference genome.</title>
        <authorList>
            <person name="Cheng C.Y."/>
            <person name="Krishnakumar V."/>
            <person name="Chan A.P."/>
            <person name="Thibaud-Nissen F."/>
            <person name="Schobel S."/>
            <person name="Town C.D."/>
        </authorList>
    </citation>
    <scope>GENOME REANNOTATION</scope>
    <source>
        <strain>cv. Columbia</strain>
    </source>
</reference>
<reference key="3">
    <citation type="journal article" date="2003" name="Science">
        <title>Empirical analysis of transcriptional activity in the Arabidopsis genome.</title>
        <authorList>
            <person name="Yamada K."/>
            <person name="Lim J."/>
            <person name="Dale J.M."/>
            <person name="Chen H."/>
            <person name="Shinn P."/>
            <person name="Palm C.J."/>
            <person name="Southwick A.M."/>
            <person name="Wu H.C."/>
            <person name="Kim C.J."/>
            <person name="Nguyen M."/>
            <person name="Pham P.K."/>
            <person name="Cheuk R.F."/>
            <person name="Karlin-Newmann G."/>
            <person name="Liu S.X."/>
            <person name="Lam B."/>
            <person name="Sakano H."/>
            <person name="Wu T."/>
            <person name="Yu G."/>
            <person name="Miranda M."/>
            <person name="Quach H.L."/>
            <person name="Tripp M."/>
            <person name="Chang C.H."/>
            <person name="Lee J.M."/>
            <person name="Toriumi M.J."/>
            <person name="Chan M.M."/>
            <person name="Tang C.C."/>
            <person name="Onodera C.S."/>
            <person name="Deng J.M."/>
            <person name="Akiyama K."/>
            <person name="Ansari Y."/>
            <person name="Arakawa T."/>
            <person name="Banh J."/>
            <person name="Banno F."/>
            <person name="Bowser L."/>
            <person name="Brooks S.Y."/>
            <person name="Carninci P."/>
            <person name="Chao Q."/>
            <person name="Choy N."/>
            <person name="Enju A."/>
            <person name="Goldsmith A.D."/>
            <person name="Gurjal M."/>
            <person name="Hansen N.F."/>
            <person name="Hayashizaki Y."/>
            <person name="Johnson-Hopson C."/>
            <person name="Hsuan V.W."/>
            <person name="Iida K."/>
            <person name="Karnes M."/>
            <person name="Khan S."/>
            <person name="Koesema E."/>
            <person name="Ishida J."/>
            <person name="Jiang P.X."/>
            <person name="Jones T."/>
            <person name="Kawai J."/>
            <person name="Kamiya A."/>
            <person name="Meyers C."/>
            <person name="Nakajima M."/>
            <person name="Narusaka M."/>
            <person name="Seki M."/>
            <person name="Sakurai T."/>
            <person name="Satou M."/>
            <person name="Tamse R."/>
            <person name="Vaysberg M."/>
            <person name="Wallender E.K."/>
            <person name="Wong C."/>
            <person name="Yamamura Y."/>
            <person name="Yuan S."/>
            <person name="Shinozaki K."/>
            <person name="Davis R.W."/>
            <person name="Theologis A."/>
            <person name="Ecker J.R."/>
        </authorList>
    </citation>
    <scope>NUCLEOTIDE SEQUENCE [LARGE SCALE MRNA]</scope>
    <source>
        <strain>cv. Columbia</strain>
    </source>
</reference>
<reference key="4">
    <citation type="submission" date="2002-03" db="EMBL/GenBank/DDBJ databases">
        <title>Full-length cDNA from Arabidopsis thaliana.</title>
        <authorList>
            <person name="Brover V.V."/>
            <person name="Troukhan M.E."/>
            <person name="Alexandrov N.A."/>
            <person name="Lu Y.-P."/>
            <person name="Flavell R.B."/>
            <person name="Feldmann K.A."/>
        </authorList>
    </citation>
    <scope>NUCLEOTIDE SEQUENCE [LARGE SCALE MRNA]</scope>
</reference>
<reference key="5">
    <citation type="journal article" date="2011" name="Plant Sci.">
        <title>Knock-out mutations of Arabidopsis SmD3-b induce pleotropic phenotypes through altered transcript splicing.</title>
        <authorList>
            <person name="Swaraz A.M."/>
            <person name="Park Y.D."/>
            <person name="Hur Y."/>
        </authorList>
    </citation>
    <scope>FUNCTION</scope>
    <scope>TISSUE SPECIFICITY</scope>
    <scope>DISRUPTION PHENOTYPE</scope>
</reference>
<feature type="chain" id="PRO_0000433110" description="Small nuclear ribonucleoprotein SmD3b">
    <location>
        <begin position="1"/>
        <end position="131"/>
    </location>
</feature>
<feature type="domain" description="Sm" evidence="2">
    <location>
        <begin position="7"/>
        <end position="79"/>
    </location>
</feature>
<feature type="region of interest" description="Disordered" evidence="3">
    <location>
        <begin position="96"/>
        <end position="131"/>
    </location>
</feature>
<feature type="sequence conflict" description="In Ref. 4; AAM63846." evidence="6" ref="4">
    <original>G</original>
    <variation>A</variation>
    <location>
        <position position="106"/>
    </location>
</feature>
<proteinExistence type="evidence at transcript level"/>
<protein>
    <recommendedName>
        <fullName evidence="6">Small nuclear ribonucleoprotein SmD3b</fullName>
        <shortName evidence="5">SmD3-b</shortName>
    </recommendedName>
    <alternativeName>
        <fullName evidence="6">snRNP core protein D3-b</fullName>
    </alternativeName>
</protein>
<name>SMD3B_ARATH</name>
<dbReference type="EMBL" id="AC027665">
    <property type="protein sequence ID" value="AAF79623.1"/>
    <property type="status" value="ALT_SEQ"/>
    <property type="molecule type" value="Genomic_DNA"/>
</dbReference>
<dbReference type="EMBL" id="AC069251">
    <property type="protein sequence ID" value="AAF80609.1"/>
    <property type="molecule type" value="Genomic_DNA"/>
</dbReference>
<dbReference type="EMBL" id="CP002684">
    <property type="protein sequence ID" value="AEE29990.1"/>
    <property type="molecule type" value="Genomic_DNA"/>
</dbReference>
<dbReference type="EMBL" id="AF412086">
    <property type="protein sequence ID" value="AAL06539.1"/>
    <property type="molecule type" value="mRNA"/>
</dbReference>
<dbReference type="EMBL" id="AY093974">
    <property type="protein sequence ID" value="AAM16235.1"/>
    <property type="molecule type" value="mRNA"/>
</dbReference>
<dbReference type="EMBL" id="AY086797">
    <property type="protein sequence ID" value="AAM63846.1"/>
    <property type="molecule type" value="mRNA"/>
</dbReference>
<dbReference type="RefSeq" id="NP_564119.1">
    <property type="nucleotide sequence ID" value="NM_101909.4"/>
</dbReference>
<dbReference type="SMR" id="Q9LM92"/>
<dbReference type="FunCoup" id="Q9LM92">
    <property type="interactions" value="4145"/>
</dbReference>
<dbReference type="IntAct" id="Q9LM92">
    <property type="interactions" value="1"/>
</dbReference>
<dbReference type="STRING" id="3702.Q9LM92"/>
<dbReference type="iPTMnet" id="Q9LM92"/>
<dbReference type="PaxDb" id="3702-AT1G20580.1"/>
<dbReference type="ProteomicsDB" id="234531"/>
<dbReference type="EnsemblPlants" id="AT1G20580.1">
    <property type="protein sequence ID" value="AT1G20580.1"/>
    <property type="gene ID" value="AT1G20580"/>
</dbReference>
<dbReference type="GeneID" id="838647"/>
<dbReference type="Gramene" id="AT1G20580.1">
    <property type="protein sequence ID" value="AT1G20580.1"/>
    <property type="gene ID" value="AT1G20580"/>
</dbReference>
<dbReference type="KEGG" id="ath:AT1G20580"/>
<dbReference type="Araport" id="AT1G20580"/>
<dbReference type="TAIR" id="AT1G20580"/>
<dbReference type="eggNOG" id="KOG3172">
    <property type="taxonomic scope" value="Eukaryota"/>
</dbReference>
<dbReference type="HOGENOM" id="CLU_099537_1_0_1"/>
<dbReference type="InParanoid" id="Q9LM92"/>
<dbReference type="OMA" id="HTITCET"/>
<dbReference type="PhylomeDB" id="Q9LM92"/>
<dbReference type="CD-CODE" id="4299E36E">
    <property type="entry name" value="Nucleolus"/>
</dbReference>
<dbReference type="PRO" id="PR:Q9LM92"/>
<dbReference type="Proteomes" id="UP000006548">
    <property type="component" value="Chromosome 1"/>
</dbReference>
<dbReference type="ExpressionAtlas" id="Q9LM92">
    <property type="expression patterns" value="baseline and differential"/>
</dbReference>
<dbReference type="GO" id="GO:0005829">
    <property type="term" value="C:cytosol"/>
    <property type="evidence" value="ECO:0007669"/>
    <property type="project" value="UniProtKB-SubCell"/>
</dbReference>
<dbReference type="GO" id="GO:0005730">
    <property type="term" value="C:nucleolus"/>
    <property type="evidence" value="ECO:0007005"/>
    <property type="project" value="TAIR"/>
</dbReference>
<dbReference type="GO" id="GO:0005681">
    <property type="term" value="C:spliceosomal complex"/>
    <property type="evidence" value="ECO:0007669"/>
    <property type="project" value="UniProtKB-KW"/>
</dbReference>
<dbReference type="GO" id="GO:0003723">
    <property type="term" value="F:RNA binding"/>
    <property type="evidence" value="ECO:0007669"/>
    <property type="project" value="UniProtKB-KW"/>
</dbReference>
<dbReference type="GO" id="GO:0048589">
    <property type="term" value="P:developmental growth"/>
    <property type="evidence" value="ECO:0000315"/>
    <property type="project" value="UniProtKB"/>
</dbReference>
<dbReference type="GO" id="GO:0000398">
    <property type="term" value="P:mRNA splicing, via spliceosome"/>
    <property type="evidence" value="ECO:0000315"/>
    <property type="project" value="UniProtKB"/>
</dbReference>
<dbReference type="GO" id="GO:0000387">
    <property type="term" value="P:spliceosomal snRNP assembly"/>
    <property type="evidence" value="ECO:0007669"/>
    <property type="project" value="InterPro"/>
</dbReference>
<dbReference type="CDD" id="cd01721">
    <property type="entry name" value="Sm_D3"/>
    <property type="match status" value="1"/>
</dbReference>
<dbReference type="FunFam" id="2.30.30.100:FF:000002">
    <property type="entry name" value="Small nuclear ribonucleoprotein Sm D3"/>
    <property type="match status" value="1"/>
</dbReference>
<dbReference type="Gene3D" id="2.30.30.100">
    <property type="match status" value="1"/>
</dbReference>
<dbReference type="InterPro" id="IPR027141">
    <property type="entry name" value="LSm4/Sm_D1/D3"/>
</dbReference>
<dbReference type="InterPro" id="IPR010920">
    <property type="entry name" value="LSM_dom_sf"/>
</dbReference>
<dbReference type="InterPro" id="IPR047575">
    <property type="entry name" value="Sm"/>
</dbReference>
<dbReference type="InterPro" id="IPR001163">
    <property type="entry name" value="Sm_dom_euk/arc"/>
</dbReference>
<dbReference type="InterPro" id="IPR034099">
    <property type="entry name" value="SmD3"/>
</dbReference>
<dbReference type="PANTHER" id="PTHR23338">
    <property type="entry name" value="SMALL NUCLEAR RIBONUCLEOPROTEIN SM"/>
    <property type="match status" value="1"/>
</dbReference>
<dbReference type="Pfam" id="PF01423">
    <property type="entry name" value="LSM"/>
    <property type="match status" value="1"/>
</dbReference>
<dbReference type="SMART" id="SM00651">
    <property type="entry name" value="Sm"/>
    <property type="match status" value="1"/>
</dbReference>
<dbReference type="SUPFAM" id="SSF50182">
    <property type="entry name" value="Sm-like ribonucleoproteins"/>
    <property type="match status" value="1"/>
</dbReference>
<dbReference type="PROSITE" id="PS52002">
    <property type="entry name" value="SM"/>
    <property type="match status" value="1"/>
</dbReference>
<gene>
    <name evidence="5" type="primary">SMD3B</name>
    <name evidence="7" type="ordered locus">At1g20580</name>
    <name evidence="9" type="ORF">F2D10.7</name>
    <name evidence="8" type="ORF">F5M15.9</name>
</gene>
<accession>Q9LM92</accession>
<accession>Q8LC48</accession>
<accession>Q9LMW6</accession>
<evidence type="ECO:0000250" key="1">
    <source>
        <dbReference type="UniProtKB" id="P62318"/>
    </source>
</evidence>
<evidence type="ECO:0000255" key="2">
    <source>
        <dbReference type="PROSITE-ProRule" id="PRU01346"/>
    </source>
</evidence>
<evidence type="ECO:0000256" key="3">
    <source>
        <dbReference type="SAM" id="MobiDB-lite"/>
    </source>
</evidence>
<evidence type="ECO:0000269" key="4">
    <source>
    </source>
</evidence>
<evidence type="ECO:0000303" key="5">
    <source>
    </source>
</evidence>
<evidence type="ECO:0000305" key="6"/>
<evidence type="ECO:0000312" key="7">
    <source>
        <dbReference type="Araport" id="AT1G20580"/>
    </source>
</evidence>
<evidence type="ECO:0000312" key="8">
    <source>
        <dbReference type="EMBL" id="AAF79623.1"/>
    </source>
</evidence>
<evidence type="ECO:0000312" key="9">
    <source>
        <dbReference type="EMBL" id="AAF80609.1"/>
    </source>
</evidence>
<sequence>MSRSLGIPVKLLHEASGHIVTVELKSGELYRGSMIECEDNWNCQLEDITYTAKDGKVSQLEHVFIRGSKVRFMVIPDILKHAPMFKRLDARIKGKSSSLGVGRGRGAMRGKPAAGPGRGTGGRGAVPPVRR</sequence>
<organism>
    <name type="scientific">Arabidopsis thaliana</name>
    <name type="common">Mouse-ear cress</name>
    <dbReference type="NCBI Taxonomy" id="3702"/>
    <lineage>
        <taxon>Eukaryota</taxon>
        <taxon>Viridiplantae</taxon>
        <taxon>Streptophyta</taxon>
        <taxon>Embryophyta</taxon>
        <taxon>Tracheophyta</taxon>
        <taxon>Spermatophyta</taxon>
        <taxon>Magnoliopsida</taxon>
        <taxon>eudicotyledons</taxon>
        <taxon>Gunneridae</taxon>
        <taxon>Pentapetalae</taxon>
        <taxon>rosids</taxon>
        <taxon>malvids</taxon>
        <taxon>Brassicales</taxon>
        <taxon>Brassicaceae</taxon>
        <taxon>Camelineae</taxon>
        <taxon>Arabidopsis</taxon>
    </lineage>
</organism>
<keyword id="KW-0963">Cytoplasm</keyword>
<keyword id="KW-0507">mRNA processing</keyword>
<keyword id="KW-0508">mRNA splicing</keyword>
<keyword id="KW-0539">Nucleus</keyword>
<keyword id="KW-1185">Reference proteome</keyword>
<keyword id="KW-0687">Ribonucleoprotein</keyword>
<keyword id="KW-0694">RNA-binding</keyword>
<keyword id="KW-0747">Spliceosome</keyword>